<comment type="function">
    <text evidence="1">Binds 16S rRNA, required for the assembly of 30S particles and may also be responsible for determining the conformation of the 16S rRNA at the A site.</text>
</comment>
<comment type="subunit">
    <text evidence="1">Part of the 30S ribosomal subunit. Contacts proteins S3 and S10.</text>
</comment>
<comment type="similarity">
    <text evidence="1">Belongs to the universal ribosomal protein uS14 family.</text>
</comment>
<proteinExistence type="inferred from homology"/>
<feature type="chain" id="PRO_1000128656" description="Small ribosomal subunit protein uS14">
    <location>
        <begin position="1"/>
        <end position="101"/>
    </location>
</feature>
<feature type="region of interest" description="Disordered" evidence="2">
    <location>
        <begin position="49"/>
        <end position="70"/>
    </location>
</feature>
<feature type="compositionally biased region" description="Polar residues" evidence="2">
    <location>
        <begin position="52"/>
        <end position="68"/>
    </location>
</feature>
<protein>
    <recommendedName>
        <fullName evidence="1">Small ribosomal subunit protein uS14</fullName>
    </recommendedName>
    <alternativeName>
        <fullName evidence="3">30S ribosomal protein S14</fullName>
    </alternativeName>
</protein>
<reference key="1">
    <citation type="journal article" date="2004" name="Proc. Natl. Acad. Sci. U.S.A.">
        <title>Insights into the evolution of Yersinia pestis through whole-genome comparison with Yersinia pseudotuberculosis.</title>
        <authorList>
            <person name="Chain P.S.G."/>
            <person name="Carniel E."/>
            <person name="Larimer F.W."/>
            <person name="Lamerdin J."/>
            <person name="Stoutland P.O."/>
            <person name="Regala W.M."/>
            <person name="Georgescu A.M."/>
            <person name="Vergez L.M."/>
            <person name="Land M.L."/>
            <person name="Motin V.L."/>
            <person name="Brubaker R.R."/>
            <person name="Fowler J."/>
            <person name="Hinnebusch J."/>
            <person name="Marceau M."/>
            <person name="Medigue C."/>
            <person name="Simonet M."/>
            <person name="Chenal-Francisque V."/>
            <person name="Souza B."/>
            <person name="Dacheux D."/>
            <person name="Elliott J.M."/>
            <person name="Derbise A."/>
            <person name="Hauser L.J."/>
            <person name="Garcia E."/>
        </authorList>
    </citation>
    <scope>NUCLEOTIDE SEQUENCE [LARGE SCALE GENOMIC DNA]</scope>
    <source>
        <strain>IP32953</strain>
    </source>
</reference>
<name>RS14_YERPS</name>
<gene>
    <name evidence="1" type="primary">rpsN</name>
    <name type="ordered locus">YPTB3685</name>
</gene>
<dbReference type="EMBL" id="BX936398">
    <property type="protein sequence ID" value="CAH22923.1"/>
    <property type="molecule type" value="Genomic_DNA"/>
</dbReference>
<dbReference type="RefSeq" id="WP_002213330.1">
    <property type="nucleotide sequence ID" value="NZ_CP009712.1"/>
</dbReference>
<dbReference type="SMR" id="Q664T4"/>
<dbReference type="GeneID" id="96663183"/>
<dbReference type="KEGG" id="ypo:BZ17_2902"/>
<dbReference type="KEGG" id="yps:YPTB3685"/>
<dbReference type="PATRIC" id="fig|273123.14.peg.3043"/>
<dbReference type="Proteomes" id="UP000001011">
    <property type="component" value="Chromosome"/>
</dbReference>
<dbReference type="GO" id="GO:0005737">
    <property type="term" value="C:cytoplasm"/>
    <property type="evidence" value="ECO:0007669"/>
    <property type="project" value="UniProtKB-ARBA"/>
</dbReference>
<dbReference type="GO" id="GO:0015935">
    <property type="term" value="C:small ribosomal subunit"/>
    <property type="evidence" value="ECO:0007669"/>
    <property type="project" value="TreeGrafter"/>
</dbReference>
<dbReference type="GO" id="GO:0019843">
    <property type="term" value="F:rRNA binding"/>
    <property type="evidence" value="ECO:0007669"/>
    <property type="project" value="UniProtKB-UniRule"/>
</dbReference>
<dbReference type="GO" id="GO:0003735">
    <property type="term" value="F:structural constituent of ribosome"/>
    <property type="evidence" value="ECO:0007669"/>
    <property type="project" value="InterPro"/>
</dbReference>
<dbReference type="GO" id="GO:0006412">
    <property type="term" value="P:translation"/>
    <property type="evidence" value="ECO:0007669"/>
    <property type="project" value="UniProtKB-UniRule"/>
</dbReference>
<dbReference type="FunFam" id="1.10.287.1480:FF:000001">
    <property type="entry name" value="30S ribosomal protein S14"/>
    <property type="match status" value="1"/>
</dbReference>
<dbReference type="Gene3D" id="1.10.287.1480">
    <property type="match status" value="1"/>
</dbReference>
<dbReference type="HAMAP" id="MF_00537">
    <property type="entry name" value="Ribosomal_uS14_1"/>
    <property type="match status" value="1"/>
</dbReference>
<dbReference type="InterPro" id="IPR001209">
    <property type="entry name" value="Ribosomal_uS14"/>
</dbReference>
<dbReference type="InterPro" id="IPR023036">
    <property type="entry name" value="Ribosomal_uS14_bac/plastid"/>
</dbReference>
<dbReference type="InterPro" id="IPR018271">
    <property type="entry name" value="Ribosomal_uS14_CS"/>
</dbReference>
<dbReference type="NCBIfam" id="NF006477">
    <property type="entry name" value="PRK08881.1"/>
    <property type="match status" value="1"/>
</dbReference>
<dbReference type="PANTHER" id="PTHR19836">
    <property type="entry name" value="30S RIBOSOMAL PROTEIN S14"/>
    <property type="match status" value="1"/>
</dbReference>
<dbReference type="PANTHER" id="PTHR19836:SF19">
    <property type="entry name" value="SMALL RIBOSOMAL SUBUNIT PROTEIN US14M"/>
    <property type="match status" value="1"/>
</dbReference>
<dbReference type="Pfam" id="PF00253">
    <property type="entry name" value="Ribosomal_S14"/>
    <property type="match status" value="1"/>
</dbReference>
<dbReference type="SUPFAM" id="SSF57716">
    <property type="entry name" value="Glucocorticoid receptor-like (DNA-binding domain)"/>
    <property type="match status" value="1"/>
</dbReference>
<dbReference type="PROSITE" id="PS00527">
    <property type="entry name" value="RIBOSOMAL_S14"/>
    <property type="match status" value="1"/>
</dbReference>
<keyword id="KW-0687">Ribonucleoprotein</keyword>
<keyword id="KW-0689">Ribosomal protein</keyword>
<keyword id="KW-0694">RNA-binding</keyword>
<keyword id="KW-0699">rRNA-binding</keyword>
<organism>
    <name type="scientific">Yersinia pseudotuberculosis serotype I (strain IP32953)</name>
    <dbReference type="NCBI Taxonomy" id="273123"/>
    <lineage>
        <taxon>Bacteria</taxon>
        <taxon>Pseudomonadati</taxon>
        <taxon>Pseudomonadota</taxon>
        <taxon>Gammaproteobacteria</taxon>
        <taxon>Enterobacterales</taxon>
        <taxon>Yersiniaceae</taxon>
        <taxon>Yersinia</taxon>
    </lineage>
</organism>
<accession>Q664T4</accession>
<sequence>MAKQSMKAREVVRVKLANKYRAKREELKAIISGVNSSDEDRWDAVLKLQSLPRDSSPSRQRNRCNQTGRPHGFLRKFGLSRIKVRETAMRGEIPGLKKASW</sequence>
<evidence type="ECO:0000255" key="1">
    <source>
        <dbReference type="HAMAP-Rule" id="MF_00537"/>
    </source>
</evidence>
<evidence type="ECO:0000256" key="2">
    <source>
        <dbReference type="SAM" id="MobiDB-lite"/>
    </source>
</evidence>
<evidence type="ECO:0000305" key="3"/>